<reference key="1">
    <citation type="journal article" date="2013" name="Plant Physiol.">
        <title>A Nostoc punctiforme Sugar Transporter Necessary to Establish a Cyanobacterium-Plant Symbiosis.</title>
        <authorList>
            <person name="Ekman M."/>
            <person name="Picossi S."/>
            <person name="Campbell E.L."/>
            <person name="Meeks J.C."/>
            <person name="Flores E."/>
        </authorList>
    </citation>
    <scope>NUCLEOTIDE SEQUENCE [LARGE SCALE GENOMIC DNA]</scope>
    <source>
        <strain>ATCC 29133 / PCC 73102</strain>
    </source>
</reference>
<proteinExistence type="inferred from homology"/>
<comment type="catalytic activity">
    <reaction evidence="1">
        <text>(2R)-3-phosphoglycerate + ATP = (2R)-3-phospho-glyceroyl phosphate + ADP</text>
        <dbReference type="Rhea" id="RHEA:14801"/>
        <dbReference type="ChEBI" id="CHEBI:30616"/>
        <dbReference type="ChEBI" id="CHEBI:57604"/>
        <dbReference type="ChEBI" id="CHEBI:58272"/>
        <dbReference type="ChEBI" id="CHEBI:456216"/>
        <dbReference type="EC" id="2.7.2.3"/>
    </reaction>
</comment>
<comment type="pathway">
    <text evidence="1">Carbohydrate degradation; glycolysis; pyruvate from D-glyceraldehyde 3-phosphate: step 2/5.</text>
</comment>
<comment type="subunit">
    <text evidence="1">Monomer.</text>
</comment>
<comment type="subcellular location">
    <subcellularLocation>
        <location evidence="1">Cytoplasm</location>
    </subcellularLocation>
</comment>
<comment type="similarity">
    <text evidence="1">Belongs to the phosphoglycerate kinase family.</text>
</comment>
<protein>
    <recommendedName>
        <fullName evidence="1">Phosphoglycerate kinase</fullName>
        <ecNumber evidence="1">2.7.2.3</ecNumber>
    </recommendedName>
</protein>
<gene>
    <name evidence="1" type="primary">pgk</name>
    <name type="ordered locus">Npun_F5938</name>
</gene>
<feature type="chain" id="PRO_1000096360" description="Phosphoglycerate kinase">
    <location>
        <begin position="1"/>
        <end position="400"/>
    </location>
</feature>
<feature type="binding site" evidence="1">
    <location>
        <begin position="24"/>
        <end position="26"/>
    </location>
    <ligand>
        <name>substrate</name>
    </ligand>
</feature>
<feature type="binding site" evidence="1">
    <location>
        <position position="40"/>
    </location>
    <ligand>
        <name>substrate</name>
    </ligand>
</feature>
<feature type="binding site" evidence="1">
    <location>
        <begin position="63"/>
        <end position="66"/>
    </location>
    <ligand>
        <name>substrate</name>
    </ligand>
</feature>
<feature type="binding site" evidence="1">
    <location>
        <position position="121"/>
    </location>
    <ligand>
        <name>substrate</name>
    </ligand>
</feature>
<feature type="binding site" evidence="1">
    <location>
        <position position="154"/>
    </location>
    <ligand>
        <name>substrate</name>
    </ligand>
</feature>
<feature type="binding site" evidence="1">
    <location>
        <position position="205"/>
    </location>
    <ligand>
        <name>ATP</name>
        <dbReference type="ChEBI" id="CHEBI:30616"/>
    </ligand>
</feature>
<feature type="binding site" evidence="1">
    <location>
        <position position="296"/>
    </location>
    <ligand>
        <name>ATP</name>
        <dbReference type="ChEBI" id="CHEBI:30616"/>
    </ligand>
</feature>
<feature type="binding site" evidence="1">
    <location>
        <position position="327"/>
    </location>
    <ligand>
        <name>ATP</name>
        <dbReference type="ChEBI" id="CHEBI:30616"/>
    </ligand>
</feature>
<feature type="binding site" evidence="1">
    <location>
        <begin position="356"/>
        <end position="359"/>
    </location>
    <ligand>
        <name>ATP</name>
        <dbReference type="ChEBI" id="CHEBI:30616"/>
    </ligand>
</feature>
<evidence type="ECO:0000255" key="1">
    <source>
        <dbReference type="HAMAP-Rule" id="MF_00145"/>
    </source>
</evidence>
<sequence>MSKKSLASLSSADISGKRALVRVDFNVPVDDQGKITDDTRIRAALPTIQDLTQKGAKVILASHFGRPKGVDDKLRLTPVAKRLSELLGQEVIKTDDSIGDEVAAKVAALQNGQVLLLENVRFYPEEEKNDAEFAKKLAANADFYVNDAFGTAHRAHASTEGVTKFLSPSVAGYLVEKELQYLQNAIENPQRPLAAIIGGSKVSSKIGVIETLLEKCDKLIIGGGMIFTFYKARGLSVGKSLVEEDKLELAKSLEAKAKERGVALLLPTDVVLADNFAPDANSQTVSIENIPDGWMGLDIGPDSVKFFQEALADTKTVIWNGPMGVFEFDKFAAGTEAIAHTLAEIGKTGTTTIIGGGDSVAAVEKVGLADQMSHISTGGGASLELLEGKVLPGIAALDDA</sequence>
<keyword id="KW-0067">ATP-binding</keyword>
<keyword id="KW-0963">Cytoplasm</keyword>
<keyword id="KW-0324">Glycolysis</keyword>
<keyword id="KW-0418">Kinase</keyword>
<keyword id="KW-0547">Nucleotide-binding</keyword>
<keyword id="KW-1185">Reference proteome</keyword>
<keyword id="KW-0808">Transferase</keyword>
<name>PGK_NOSP7</name>
<organism>
    <name type="scientific">Nostoc punctiforme (strain ATCC 29133 / PCC 73102)</name>
    <dbReference type="NCBI Taxonomy" id="63737"/>
    <lineage>
        <taxon>Bacteria</taxon>
        <taxon>Bacillati</taxon>
        <taxon>Cyanobacteriota</taxon>
        <taxon>Cyanophyceae</taxon>
        <taxon>Nostocales</taxon>
        <taxon>Nostocaceae</taxon>
        <taxon>Nostoc</taxon>
    </lineage>
</organism>
<dbReference type="EC" id="2.7.2.3" evidence="1"/>
<dbReference type="EMBL" id="CP001037">
    <property type="protein sequence ID" value="ACC84229.1"/>
    <property type="molecule type" value="Genomic_DNA"/>
</dbReference>
<dbReference type="RefSeq" id="WP_012412172.1">
    <property type="nucleotide sequence ID" value="NC_010628.1"/>
</dbReference>
<dbReference type="SMR" id="B2ITU1"/>
<dbReference type="STRING" id="63737.Npun_F5938"/>
<dbReference type="EnsemblBacteria" id="ACC84229">
    <property type="protein sequence ID" value="ACC84229"/>
    <property type="gene ID" value="Npun_F5938"/>
</dbReference>
<dbReference type="KEGG" id="npu:Npun_F5938"/>
<dbReference type="eggNOG" id="COG0126">
    <property type="taxonomic scope" value="Bacteria"/>
</dbReference>
<dbReference type="HOGENOM" id="CLU_025427_0_2_3"/>
<dbReference type="OrthoDB" id="9808460at2"/>
<dbReference type="PhylomeDB" id="B2ITU1"/>
<dbReference type="UniPathway" id="UPA00109">
    <property type="reaction ID" value="UER00185"/>
</dbReference>
<dbReference type="Proteomes" id="UP000001191">
    <property type="component" value="Chromosome"/>
</dbReference>
<dbReference type="GO" id="GO:0005829">
    <property type="term" value="C:cytosol"/>
    <property type="evidence" value="ECO:0007669"/>
    <property type="project" value="TreeGrafter"/>
</dbReference>
<dbReference type="GO" id="GO:0043531">
    <property type="term" value="F:ADP binding"/>
    <property type="evidence" value="ECO:0007669"/>
    <property type="project" value="TreeGrafter"/>
</dbReference>
<dbReference type="GO" id="GO:0005524">
    <property type="term" value="F:ATP binding"/>
    <property type="evidence" value="ECO:0007669"/>
    <property type="project" value="UniProtKB-KW"/>
</dbReference>
<dbReference type="GO" id="GO:0004618">
    <property type="term" value="F:phosphoglycerate kinase activity"/>
    <property type="evidence" value="ECO:0007669"/>
    <property type="project" value="UniProtKB-UniRule"/>
</dbReference>
<dbReference type="GO" id="GO:0006094">
    <property type="term" value="P:gluconeogenesis"/>
    <property type="evidence" value="ECO:0007669"/>
    <property type="project" value="TreeGrafter"/>
</dbReference>
<dbReference type="GO" id="GO:0006096">
    <property type="term" value="P:glycolytic process"/>
    <property type="evidence" value="ECO:0007669"/>
    <property type="project" value="UniProtKB-UniRule"/>
</dbReference>
<dbReference type="CDD" id="cd00318">
    <property type="entry name" value="Phosphoglycerate_kinase"/>
    <property type="match status" value="1"/>
</dbReference>
<dbReference type="FunFam" id="3.40.50.1260:FF:000003">
    <property type="entry name" value="Phosphoglycerate kinase"/>
    <property type="match status" value="1"/>
</dbReference>
<dbReference type="FunFam" id="3.40.50.1260:FF:000006">
    <property type="entry name" value="Phosphoglycerate kinase"/>
    <property type="match status" value="1"/>
</dbReference>
<dbReference type="Gene3D" id="3.40.50.1260">
    <property type="entry name" value="Phosphoglycerate kinase, N-terminal domain"/>
    <property type="match status" value="2"/>
</dbReference>
<dbReference type="HAMAP" id="MF_00145">
    <property type="entry name" value="Phosphoglyc_kinase"/>
    <property type="match status" value="1"/>
</dbReference>
<dbReference type="InterPro" id="IPR001576">
    <property type="entry name" value="Phosphoglycerate_kinase"/>
</dbReference>
<dbReference type="InterPro" id="IPR015824">
    <property type="entry name" value="Phosphoglycerate_kinase_N"/>
</dbReference>
<dbReference type="InterPro" id="IPR036043">
    <property type="entry name" value="Phosphoglycerate_kinase_sf"/>
</dbReference>
<dbReference type="PANTHER" id="PTHR11406">
    <property type="entry name" value="PHOSPHOGLYCERATE KINASE"/>
    <property type="match status" value="1"/>
</dbReference>
<dbReference type="PANTHER" id="PTHR11406:SF23">
    <property type="entry name" value="PHOSPHOGLYCERATE KINASE 1, CHLOROPLASTIC-RELATED"/>
    <property type="match status" value="1"/>
</dbReference>
<dbReference type="Pfam" id="PF00162">
    <property type="entry name" value="PGK"/>
    <property type="match status" value="1"/>
</dbReference>
<dbReference type="PIRSF" id="PIRSF000724">
    <property type="entry name" value="Pgk"/>
    <property type="match status" value="1"/>
</dbReference>
<dbReference type="PRINTS" id="PR00477">
    <property type="entry name" value="PHGLYCKINASE"/>
</dbReference>
<dbReference type="SUPFAM" id="SSF53748">
    <property type="entry name" value="Phosphoglycerate kinase"/>
    <property type="match status" value="1"/>
</dbReference>
<accession>B2ITU1</accession>